<proteinExistence type="inferred from homology"/>
<name>RS20_THERP</name>
<keyword id="KW-1185">Reference proteome</keyword>
<keyword id="KW-0687">Ribonucleoprotein</keyword>
<keyword id="KW-0689">Ribosomal protein</keyword>
<keyword id="KW-0694">RNA-binding</keyword>
<keyword id="KW-0699">rRNA-binding</keyword>
<organism>
    <name type="scientific">Thermomicrobium roseum (strain ATCC 27502 / DSM 5159 / P-2)</name>
    <dbReference type="NCBI Taxonomy" id="309801"/>
    <lineage>
        <taxon>Bacteria</taxon>
        <taxon>Pseudomonadati</taxon>
        <taxon>Thermomicrobiota</taxon>
        <taxon>Thermomicrobia</taxon>
        <taxon>Thermomicrobiales</taxon>
        <taxon>Thermomicrobiaceae</taxon>
        <taxon>Thermomicrobium</taxon>
    </lineage>
</organism>
<dbReference type="EMBL" id="CP001275">
    <property type="protein sequence ID" value="ACM04904.1"/>
    <property type="molecule type" value="Genomic_DNA"/>
</dbReference>
<dbReference type="RefSeq" id="WP_012642233.1">
    <property type="nucleotide sequence ID" value="NC_011959.1"/>
</dbReference>
<dbReference type="SMR" id="B9KZD4"/>
<dbReference type="STRING" id="309801.trd_0848"/>
<dbReference type="KEGG" id="tro:trd_0848"/>
<dbReference type="eggNOG" id="COG0268">
    <property type="taxonomic scope" value="Bacteria"/>
</dbReference>
<dbReference type="HOGENOM" id="CLU_160655_3_1_0"/>
<dbReference type="OrthoDB" id="9808392at2"/>
<dbReference type="Proteomes" id="UP000000447">
    <property type="component" value="Chromosome"/>
</dbReference>
<dbReference type="GO" id="GO:0005829">
    <property type="term" value="C:cytosol"/>
    <property type="evidence" value="ECO:0007669"/>
    <property type="project" value="TreeGrafter"/>
</dbReference>
<dbReference type="GO" id="GO:0015935">
    <property type="term" value="C:small ribosomal subunit"/>
    <property type="evidence" value="ECO:0007669"/>
    <property type="project" value="TreeGrafter"/>
</dbReference>
<dbReference type="GO" id="GO:0070181">
    <property type="term" value="F:small ribosomal subunit rRNA binding"/>
    <property type="evidence" value="ECO:0007669"/>
    <property type="project" value="TreeGrafter"/>
</dbReference>
<dbReference type="GO" id="GO:0003735">
    <property type="term" value="F:structural constituent of ribosome"/>
    <property type="evidence" value="ECO:0007669"/>
    <property type="project" value="InterPro"/>
</dbReference>
<dbReference type="GO" id="GO:0006412">
    <property type="term" value="P:translation"/>
    <property type="evidence" value="ECO:0007669"/>
    <property type="project" value="UniProtKB-UniRule"/>
</dbReference>
<dbReference type="FunFam" id="1.20.58.110:FF:000001">
    <property type="entry name" value="30S ribosomal protein S20"/>
    <property type="match status" value="1"/>
</dbReference>
<dbReference type="Gene3D" id="1.20.58.110">
    <property type="entry name" value="Ribosomal protein S20"/>
    <property type="match status" value="1"/>
</dbReference>
<dbReference type="HAMAP" id="MF_00500">
    <property type="entry name" value="Ribosomal_bS20"/>
    <property type="match status" value="1"/>
</dbReference>
<dbReference type="InterPro" id="IPR002583">
    <property type="entry name" value="Ribosomal_bS20"/>
</dbReference>
<dbReference type="InterPro" id="IPR036510">
    <property type="entry name" value="Ribosomal_bS20_sf"/>
</dbReference>
<dbReference type="NCBIfam" id="TIGR00029">
    <property type="entry name" value="S20"/>
    <property type="match status" value="1"/>
</dbReference>
<dbReference type="PANTHER" id="PTHR33398">
    <property type="entry name" value="30S RIBOSOMAL PROTEIN S20"/>
    <property type="match status" value="1"/>
</dbReference>
<dbReference type="PANTHER" id="PTHR33398:SF1">
    <property type="entry name" value="SMALL RIBOSOMAL SUBUNIT PROTEIN BS20C"/>
    <property type="match status" value="1"/>
</dbReference>
<dbReference type="Pfam" id="PF01649">
    <property type="entry name" value="Ribosomal_S20p"/>
    <property type="match status" value="1"/>
</dbReference>
<dbReference type="SUPFAM" id="SSF46992">
    <property type="entry name" value="Ribosomal protein S20"/>
    <property type="match status" value="1"/>
</dbReference>
<reference key="1">
    <citation type="journal article" date="2009" name="PLoS ONE">
        <title>Complete genome sequence of the aerobic CO-oxidizing thermophile Thermomicrobium roseum.</title>
        <authorList>
            <person name="Wu D."/>
            <person name="Raymond J."/>
            <person name="Wu M."/>
            <person name="Chatterji S."/>
            <person name="Ren Q."/>
            <person name="Graham J.E."/>
            <person name="Bryant D.A."/>
            <person name="Robb F."/>
            <person name="Colman A."/>
            <person name="Tallon L.J."/>
            <person name="Badger J.H."/>
            <person name="Madupu R."/>
            <person name="Ward N.L."/>
            <person name="Eisen J.A."/>
        </authorList>
    </citation>
    <scope>NUCLEOTIDE SEQUENCE [LARGE SCALE GENOMIC DNA]</scope>
    <source>
        <strain>ATCC 27502 / DSM 5159 / P-2</strain>
    </source>
</reference>
<gene>
    <name evidence="1" type="primary">rpsT</name>
    <name type="ordered locus">trd_0848</name>
</gene>
<protein>
    <recommendedName>
        <fullName evidence="1">Small ribosomal subunit protein bS20</fullName>
    </recommendedName>
    <alternativeName>
        <fullName evidence="2">30S ribosomal protein S20</fullName>
    </alternativeName>
</protein>
<accession>B9KZD4</accession>
<sequence length="99" mass="11289">MPNTKSAARALRRSERRRLRNRMWRSMARTFIKKARKLMEAGDLEAAARVIGDAISTLDRAAAKGAIHKNNAARRKSRLMKRFNALVKARLQQGQEQST</sequence>
<comment type="function">
    <text evidence="1">Binds directly to 16S ribosomal RNA.</text>
</comment>
<comment type="similarity">
    <text evidence="1">Belongs to the bacterial ribosomal protein bS20 family.</text>
</comment>
<evidence type="ECO:0000255" key="1">
    <source>
        <dbReference type="HAMAP-Rule" id="MF_00500"/>
    </source>
</evidence>
<evidence type="ECO:0000305" key="2"/>
<feature type="chain" id="PRO_1000194271" description="Small ribosomal subunit protein bS20">
    <location>
        <begin position="1"/>
        <end position="99"/>
    </location>
</feature>